<evidence type="ECO:0000255" key="1">
    <source>
        <dbReference type="HAMAP-Rule" id="MF_00600"/>
    </source>
</evidence>
<keyword id="KW-0067">ATP-binding</keyword>
<keyword id="KW-0143">Chaperone</keyword>
<keyword id="KW-0963">Cytoplasm</keyword>
<keyword id="KW-0413">Isomerase</keyword>
<keyword id="KW-0547">Nucleotide-binding</keyword>
<proteinExistence type="inferred from homology"/>
<dbReference type="EC" id="5.6.1.7" evidence="1"/>
<dbReference type="EMBL" id="CP001277">
    <property type="protein sequence ID" value="ACQ67370.1"/>
    <property type="molecule type" value="Genomic_DNA"/>
</dbReference>
<dbReference type="RefSeq" id="WP_015873191.1">
    <property type="nucleotide sequence ID" value="NC_012751.1"/>
</dbReference>
<dbReference type="SMR" id="C4K477"/>
<dbReference type="STRING" id="572265.HDEF_0629"/>
<dbReference type="GeneID" id="66260498"/>
<dbReference type="KEGG" id="hde:HDEF_0629"/>
<dbReference type="eggNOG" id="COG0459">
    <property type="taxonomic scope" value="Bacteria"/>
</dbReference>
<dbReference type="HOGENOM" id="CLU_016503_3_0_6"/>
<dbReference type="Proteomes" id="UP000002334">
    <property type="component" value="Chromosome"/>
</dbReference>
<dbReference type="GO" id="GO:0005737">
    <property type="term" value="C:cytoplasm"/>
    <property type="evidence" value="ECO:0007669"/>
    <property type="project" value="UniProtKB-SubCell"/>
</dbReference>
<dbReference type="GO" id="GO:0005524">
    <property type="term" value="F:ATP binding"/>
    <property type="evidence" value="ECO:0007669"/>
    <property type="project" value="UniProtKB-UniRule"/>
</dbReference>
<dbReference type="GO" id="GO:0140662">
    <property type="term" value="F:ATP-dependent protein folding chaperone"/>
    <property type="evidence" value="ECO:0007669"/>
    <property type="project" value="InterPro"/>
</dbReference>
<dbReference type="GO" id="GO:0016853">
    <property type="term" value="F:isomerase activity"/>
    <property type="evidence" value="ECO:0007669"/>
    <property type="project" value="UniProtKB-KW"/>
</dbReference>
<dbReference type="GO" id="GO:0051082">
    <property type="term" value="F:unfolded protein binding"/>
    <property type="evidence" value="ECO:0007669"/>
    <property type="project" value="UniProtKB-UniRule"/>
</dbReference>
<dbReference type="GO" id="GO:0042026">
    <property type="term" value="P:protein refolding"/>
    <property type="evidence" value="ECO:0007669"/>
    <property type="project" value="UniProtKB-UniRule"/>
</dbReference>
<dbReference type="CDD" id="cd03344">
    <property type="entry name" value="GroEL"/>
    <property type="match status" value="1"/>
</dbReference>
<dbReference type="FunFam" id="1.10.560.10:FF:000001">
    <property type="entry name" value="60 kDa chaperonin"/>
    <property type="match status" value="1"/>
</dbReference>
<dbReference type="FunFam" id="3.50.7.10:FF:000001">
    <property type="entry name" value="60 kDa chaperonin"/>
    <property type="match status" value="1"/>
</dbReference>
<dbReference type="Gene3D" id="3.50.7.10">
    <property type="entry name" value="GroEL"/>
    <property type="match status" value="1"/>
</dbReference>
<dbReference type="Gene3D" id="1.10.560.10">
    <property type="entry name" value="GroEL-like equatorial domain"/>
    <property type="match status" value="1"/>
</dbReference>
<dbReference type="Gene3D" id="3.30.260.10">
    <property type="entry name" value="TCP-1-like chaperonin intermediate domain"/>
    <property type="match status" value="1"/>
</dbReference>
<dbReference type="HAMAP" id="MF_00600">
    <property type="entry name" value="CH60"/>
    <property type="match status" value="1"/>
</dbReference>
<dbReference type="InterPro" id="IPR018370">
    <property type="entry name" value="Chaperonin_Cpn60_CS"/>
</dbReference>
<dbReference type="InterPro" id="IPR001844">
    <property type="entry name" value="Cpn60/GroEL"/>
</dbReference>
<dbReference type="InterPro" id="IPR002423">
    <property type="entry name" value="Cpn60/GroEL/TCP-1"/>
</dbReference>
<dbReference type="InterPro" id="IPR027409">
    <property type="entry name" value="GroEL-like_apical_dom_sf"/>
</dbReference>
<dbReference type="InterPro" id="IPR027413">
    <property type="entry name" value="GROEL-like_equatorial_sf"/>
</dbReference>
<dbReference type="InterPro" id="IPR027410">
    <property type="entry name" value="TCP-1-like_intermed_sf"/>
</dbReference>
<dbReference type="NCBIfam" id="TIGR02348">
    <property type="entry name" value="GroEL"/>
    <property type="match status" value="1"/>
</dbReference>
<dbReference type="NCBIfam" id="NF000592">
    <property type="entry name" value="PRK00013.1"/>
    <property type="match status" value="1"/>
</dbReference>
<dbReference type="NCBIfam" id="NF009487">
    <property type="entry name" value="PRK12849.1"/>
    <property type="match status" value="1"/>
</dbReference>
<dbReference type="NCBIfam" id="NF009488">
    <property type="entry name" value="PRK12850.1"/>
    <property type="match status" value="1"/>
</dbReference>
<dbReference type="NCBIfam" id="NF009489">
    <property type="entry name" value="PRK12851.1"/>
    <property type="match status" value="1"/>
</dbReference>
<dbReference type="PANTHER" id="PTHR45633">
    <property type="entry name" value="60 KDA HEAT SHOCK PROTEIN, MITOCHONDRIAL"/>
    <property type="match status" value="1"/>
</dbReference>
<dbReference type="Pfam" id="PF00118">
    <property type="entry name" value="Cpn60_TCP1"/>
    <property type="match status" value="1"/>
</dbReference>
<dbReference type="PRINTS" id="PR00298">
    <property type="entry name" value="CHAPERONIN60"/>
</dbReference>
<dbReference type="SUPFAM" id="SSF52029">
    <property type="entry name" value="GroEL apical domain-like"/>
    <property type="match status" value="1"/>
</dbReference>
<dbReference type="SUPFAM" id="SSF48592">
    <property type="entry name" value="GroEL equatorial domain-like"/>
    <property type="match status" value="1"/>
</dbReference>
<dbReference type="SUPFAM" id="SSF54849">
    <property type="entry name" value="GroEL-intermediate domain like"/>
    <property type="match status" value="1"/>
</dbReference>
<dbReference type="PROSITE" id="PS00296">
    <property type="entry name" value="CHAPERONINS_CPN60"/>
    <property type="match status" value="1"/>
</dbReference>
<gene>
    <name evidence="1" type="primary">groEL</name>
    <name evidence="1" type="synonym">groL</name>
    <name type="ordered locus">HDEF_0629</name>
</gene>
<comment type="function">
    <text evidence="1">Together with its co-chaperonin GroES, plays an essential role in assisting protein folding. The GroEL-GroES system forms a nano-cage that allows encapsulation of the non-native substrate proteins and provides a physical environment optimized to promote and accelerate protein folding.</text>
</comment>
<comment type="catalytic activity">
    <reaction evidence="1">
        <text>ATP + H2O + a folded polypeptide = ADP + phosphate + an unfolded polypeptide.</text>
        <dbReference type="EC" id="5.6.1.7"/>
    </reaction>
</comment>
<comment type="subunit">
    <text evidence="1">Forms a cylinder of 14 subunits composed of two heptameric rings stacked back-to-back. Interacts with the co-chaperonin GroES.</text>
</comment>
<comment type="subcellular location">
    <subcellularLocation>
        <location evidence="1">Cytoplasm</location>
    </subcellularLocation>
</comment>
<comment type="similarity">
    <text evidence="1">Belongs to the chaperonin (HSP60) family.</text>
</comment>
<feature type="chain" id="PRO_1000212203" description="Chaperonin GroEL">
    <location>
        <begin position="1"/>
        <end position="552"/>
    </location>
</feature>
<feature type="binding site" evidence="1">
    <location>
        <begin position="30"/>
        <end position="33"/>
    </location>
    <ligand>
        <name>ATP</name>
        <dbReference type="ChEBI" id="CHEBI:30616"/>
    </ligand>
</feature>
<feature type="binding site" evidence="1">
    <location>
        <position position="51"/>
    </location>
    <ligand>
        <name>ATP</name>
        <dbReference type="ChEBI" id="CHEBI:30616"/>
    </ligand>
</feature>
<feature type="binding site" evidence="1">
    <location>
        <begin position="87"/>
        <end position="91"/>
    </location>
    <ligand>
        <name>ATP</name>
        <dbReference type="ChEBI" id="CHEBI:30616"/>
    </ligand>
</feature>
<feature type="binding site" evidence="1">
    <location>
        <position position="415"/>
    </location>
    <ligand>
        <name>ATP</name>
        <dbReference type="ChEBI" id="CHEBI:30616"/>
    </ligand>
</feature>
<feature type="binding site" evidence="1">
    <location>
        <position position="499"/>
    </location>
    <ligand>
        <name>ATP</name>
        <dbReference type="ChEBI" id="CHEBI:30616"/>
    </ligand>
</feature>
<sequence>MAAKDLKFGNDARKKMLKGVNILANAVKVTLGPKGRNVVLDKSYGAPSITKDGVSVARDIELEDKFENMGAQMLKEVASKANDAAGDGTTTATVLAQSIVTEGLKAVAAGMNPMDLKRGIDKAVDAAVEELKKLSKPCKDSKEIAQVGTISANADEKVGTLISDAMKRVTNEGVITVEEASGLEDGLIVVEGMQFDRGYLSPYFINKQESSSIEFDNPYILLVDKKISNIRDMLSILEVVAKEGKPLLIIAEDVEGEALATLVVNTMRGIVKVAAVKAPGFGDRRKEMLQDIAVLTHGHVISEETGDSLEKATQENLGKAKRVVITKDATTIIDGAGEKSRIEARVQNIRKQIENATSDYDKEKLQERVAKLSGGVAVIKVGAPTEIAMKEKKARVEDALQATRAAVEEGVVPGGGVALIRVASKIANSSLKGDNEDQNVGIRVALRAMESPLRQIVVNAGEEASVIANKVKENKGNDNYGYNAQTEAYGDMIEMGILDPTKVTRSALQYAASIAGLMITTECMVTDLPKEEKASDMGSGGMGGMGGMNGMM</sequence>
<reference key="1">
    <citation type="journal article" date="2009" name="Proc. Natl. Acad. Sci. U.S.A.">
        <title>Hamiltonella defensa, genome evolution of protective bacterial endosymbiont from pathogenic ancestors.</title>
        <authorList>
            <person name="Degnan P.H."/>
            <person name="Yu Y."/>
            <person name="Sisneros N."/>
            <person name="Wing R.A."/>
            <person name="Moran N.A."/>
        </authorList>
    </citation>
    <scope>NUCLEOTIDE SEQUENCE [LARGE SCALE GENOMIC DNA]</scope>
    <source>
        <strain>5AT</strain>
    </source>
</reference>
<organism>
    <name type="scientific">Hamiltonella defensa subsp. Acyrthosiphon pisum (strain 5AT)</name>
    <dbReference type="NCBI Taxonomy" id="572265"/>
    <lineage>
        <taxon>Bacteria</taxon>
        <taxon>Pseudomonadati</taxon>
        <taxon>Pseudomonadota</taxon>
        <taxon>Gammaproteobacteria</taxon>
        <taxon>Enterobacterales</taxon>
        <taxon>Enterobacteriaceae</taxon>
        <taxon>aphid secondary symbionts</taxon>
        <taxon>Candidatus Hamiltonella</taxon>
    </lineage>
</organism>
<protein>
    <recommendedName>
        <fullName evidence="1">Chaperonin GroEL</fullName>
        <ecNumber evidence="1">5.6.1.7</ecNumber>
    </recommendedName>
    <alternativeName>
        <fullName evidence="1">60 kDa chaperonin</fullName>
    </alternativeName>
    <alternativeName>
        <fullName evidence="1">Chaperonin-60</fullName>
        <shortName evidence="1">Cpn60</shortName>
    </alternativeName>
</protein>
<accession>C4K477</accession>
<name>CH60_HAMD5</name>